<accession>Q43495</accession>
<proteinExistence type="evidence at transcript level"/>
<reference key="1">
    <citation type="journal article" date="1993" name="Plant Physiol.">
        <title>Nucleotide sequence of a stamen- and tapetum-specific gene from Lycopersicon esculentum.</title>
        <authorList>
            <person name="Chen R."/>
            <person name="Smith A.G."/>
        </authorList>
    </citation>
    <scope>NUCLEOTIDE SEQUENCE [MRNA]</scope>
    <source>
        <strain>cv. VF36</strain>
        <tissue>Anther</tissue>
    </source>
</reference>
<name>108_SOLLC</name>
<organism>
    <name type="scientific">Solanum lycopersicum</name>
    <name type="common">Tomato</name>
    <name type="synonym">Lycopersicon esculentum</name>
    <dbReference type="NCBI Taxonomy" id="4081"/>
    <lineage>
        <taxon>Eukaryota</taxon>
        <taxon>Viridiplantae</taxon>
        <taxon>Streptophyta</taxon>
        <taxon>Embryophyta</taxon>
        <taxon>Tracheophyta</taxon>
        <taxon>Spermatophyta</taxon>
        <taxon>Magnoliopsida</taxon>
        <taxon>eudicotyledons</taxon>
        <taxon>Gunneridae</taxon>
        <taxon>Pentapetalae</taxon>
        <taxon>asterids</taxon>
        <taxon>lamiids</taxon>
        <taxon>Solanales</taxon>
        <taxon>Solanaceae</taxon>
        <taxon>Solanoideae</taxon>
        <taxon>Solaneae</taxon>
        <taxon>Solanum</taxon>
        <taxon>Solanum subgen. Lycopersicon</taxon>
    </lineage>
</organism>
<comment type="subcellular location">
    <subcellularLocation>
        <location evidence="3">Secreted</location>
    </subcellularLocation>
</comment>
<comment type="tissue specificity">
    <text>Stamen- and tapetum-specific.</text>
</comment>
<comment type="similarity">
    <text evidence="3">Belongs to the A9/FIL1 family.</text>
</comment>
<dbReference type="EMBL" id="Z14088">
    <property type="protein sequence ID" value="CAA78466.1"/>
    <property type="molecule type" value="mRNA"/>
</dbReference>
<dbReference type="PIR" id="S26409">
    <property type="entry name" value="S26409"/>
</dbReference>
<dbReference type="RefSeq" id="NP_001296225.1">
    <property type="nucleotide sequence ID" value="NM_001309296.1"/>
</dbReference>
<dbReference type="SMR" id="Q43495"/>
<dbReference type="STRING" id="4081.Q43495"/>
<dbReference type="PaxDb" id="4081-Solyc01g009590.2.1"/>
<dbReference type="EnsemblPlants" id="Solyc01g009590.3.1">
    <property type="protein sequence ID" value="Solyc01g009590.3.1"/>
    <property type="gene ID" value="Solyc01g009590.3"/>
</dbReference>
<dbReference type="GeneID" id="544145"/>
<dbReference type="Gramene" id="Solyc01g009590.3.1">
    <property type="protein sequence ID" value="Solyc01g009590.3.1"/>
    <property type="gene ID" value="Solyc01g009590.3"/>
</dbReference>
<dbReference type="KEGG" id="sly:544145"/>
<dbReference type="eggNOG" id="ENOG502S7SH">
    <property type="taxonomic scope" value="Eukaryota"/>
</dbReference>
<dbReference type="HOGENOM" id="CLU_177257_0_0_1"/>
<dbReference type="InParanoid" id="Q43495"/>
<dbReference type="OMA" id="ECACSTM"/>
<dbReference type="OrthoDB" id="1873458at2759"/>
<dbReference type="PhylomeDB" id="Q43495"/>
<dbReference type="Proteomes" id="UP000004994">
    <property type="component" value="Chromosome 1"/>
</dbReference>
<dbReference type="GO" id="GO:0005576">
    <property type="term" value="C:extracellular region"/>
    <property type="evidence" value="ECO:0007669"/>
    <property type="project" value="UniProtKB-SubCell"/>
</dbReference>
<dbReference type="Gene3D" id="1.10.110.10">
    <property type="entry name" value="Plant lipid-transfer and hydrophobic proteins"/>
    <property type="match status" value="1"/>
</dbReference>
<dbReference type="InterPro" id="IPR036312">
    <property type="entry name" value="Bifun_inhib/LTP/seed_sf"/>
</dbReference>
<dbReference type="InterPro" id="IPR016140">
    <property type="entry name" value="Bifunc_inhib/LTP/seed_store"/>
</dbReference>
<dbReference type="PANTHER" id="PTHR35501:SF8">
    <property type="entry name" value="PROTEIN 108"/>
    <property type="match status" value="1"/>
</dbReference>
<dbReference type="PANTHER" id="PTHR35501">
    <property type="entry name" value="PROTEIN YY1"/>
    <property type="match status" value="1"/>
</dbReference>
<dbReference type="Pfam" id="PF00234">
    <property type="entry name" value="Tryp_alpha_amyl"/>
    <property type="match status" value="1"/>
</dbReference>
<dbReference type="SMART" id="SM00499">
    <property type="entry name" value="AAI"/>
    <property type="match status" value="1"/>
</dbReference>
<dbReference type="SUPFAM" id="SSF47699">
    <property type="entry name" value="Bifunctional inhibitor/lipid-transfer protein/seed storage 2S albumin"/>
    <property type="match status" value="1"/>
</dbReference>
<sequence length="102" mass="10576">MASVKSSSSSSSSSFISLLLLILLVIVLQSQVIECQPQQSCTASLTGLNVCAPFLVPGSPTASTECCNAVQSINHDCMCNTMRIAAQIPAQCNLPPLSCSAN</sequence>
<evidence type="ECO:0000250" key="1"/>
<evidence type="ECO:0000255" key="2"/>
<evidence type="ECO:0000305" key="3"/>
<feature type="signal peptide" evidence="2">
    <location>
        <begin position="1"/>
        <end position="30"/>
    </location>
</feature>
<feature type="chain" id="PRO_0000000238" description="Protein 108">
    <location>
        <begin position="31"/>
        <end position="102"/>
    </location>
</feature>
<feature type="disulfide bond" evidence="1">
    <location>
        <begin position="41"/>
        <end position="77"/>
    </location>
</feature>
<feature type="disulfide bond" evidence="1">
    <location>
        <begin position="51"/>
        <end position="66"/>
    </location>
</feature>
<feature type="disulfide bond" evidence="1">
    <location>
        <begin position="67"/>
        <end position="92"/>
    </location>
</feature>
<feature type="disulfide bond" evidence="1">
    <location>
        <begin position="79"/>
        <end position="99"/>
    </location>
</feature>
<keyword id="KW-1015">Disulfide bond</keyword>
<keyword id="KW-1185">Reference proteome</keyword>
<keyword id="KW-0964">Secreted</keyword>
<keyword id="KW-0732">Signal</keyword>
<protein>
    <recommendedName>
        <fullName>Protein 108</fullName>
    </recommendedName>
</protein>